<feature type="initiator methionine" description="Removed; by host" evidence="1">
    <location>
        <position position="1"/>
    </location>
</feature>
<feature type="chain" id="PRO_0000261228" description="Gag polyprotein">
    <location>
        <begin position="2"/>
        <end position="501"/>
    </location>
</feature>
<feature type="chain" id="PRO_0000038577" description="Matrix protein p17" evidence="1">
    <location>
        <begin position="2"/>
        <end position="132"/>
    </location>
</feature>
<feature type="chain" id="PRO_0000038578" description="Capsid protein p24" evidence="1">
    <location>
        <begin position="133"/>
        <end position="363"/>
    </location>
</feature>
<feature type="peptide" id="PRO_0000038579" description="Spacer peptide 1" evidence="1">
    <location>
        <begin position="364"/>
        <end position="377"/>
    </location>
</feature>
<feature type="chain" id="PRO_0000038580" description="Nucleocapsid protein p7" evidence="1">
    <location>
        <begin position="378"/>
        <end position="434"/>
    </location>
</feature>
<feature type="peptide" id="PRO_0000038581" description="Spacer peptide 2" evidence="1">
    <location>
        <begin position="435"/>
        <end position="450"/>
    </location>
</feature>
<feature type="chain" id="PRO_0000038582" description="p6-gag" evidence="1">
    <location>
        <begin position="451"/>
        <end position="501"/>
    </location>
</feature>
<feature type="zinc finger region" description="CCHC-type 1" evidence="8">
    <location>
        <begin position="390"/>
        <end position="407"/>
    </location>
</feature>
<feature type="zinc finger region" description="CCHC-type 2" evidence="8">
    <location>
        <begin position="411"/>
        <end position="428"/>
    </location>
</feature>
<feature type="region of interest" description="Interaction with Gp41" evidence="6">
    <location>
        <begin position="7"/>
        <end position="31"/>
    </location>
</feature>
<feature type="region of interest" description="Interaction with host CALM1" evidence="5">
    <location>
        <begin position="8"/>
        <end position="43"/>
    </location>
</feature>
<feature type="region of interest" description="Interaction with host AP3D1" evidence="7">
    <location>
        <begin position="12"/>
        <end position="19"/>
    </location>
</feature>
<feature type="region of interest" description="Interaction with membrane phosphatidylinositol 4,5-bisphosphate and RNA" evidence="6">
    <location>
        <begin position="14"/>
        <end position="33"/>
    </location>
</feature>
<feature type="region of interest" description="Interaction with membrane phosphatidylinositol 4,5-bisphosphate" evidence="6">
    <location>
        <begin position="73"/>
        <end position="77"/>
    </location>
</feature>
<feature type="region of interest" description="Disordered" evidence="9">
    <location>
        <begin position="106"/>
        <end position="128"/>
    </location>
</feature>
<feature type="region of interest" description="Interaction with host PPIA/CYPA and NUP153" evidence="6">
    <location>
        <begin position="189"/>
        <end position="227"/>
    </location>
</feature>
<feature type="region of interest" description="PPIA/CYPA-binding loop" evidence="5">
    <location>
        <begin position="217"/>
        <end position="225"/>
    </location>
</feature>
<feature type="region of interest" description="Dimerization/Multimerization of capsid protein p24" evidence="5">
    <location>
        <begin position="277"/>
        <end position="363"/>
    </location>
</feature>
<feature type="region of interest" description="Disordered" evidence="9">
    <location>
        <begin position="444"/>
        <end position="482"/>
    </location>
</feature>
<feature type="short sequence motif" description="Nuclear export signal" evidence="1">
    <location>
        <begin position="16"/>
        <end position="22"/>
    </location>
</feature>
<feature type="short sequence motif" description="Nuclear localization signal" evidence="1">
    <location>
        <begin position="26"/>
        <end position="32"/>
    </location>
</feature>
<feature type="short sequence motif" description="PTAP/PSAP motif">
    <location>
        <begin position="457"/>
        <end position="460"/>
    </location>
</feature>
<feature type="short sequence motif" description="LYPX(n)L motif">
    <location>
        <begin position="484"/>
        <end position="493"/>
    </location>
</feature>
<feature type="site" description="Cleavage; by viral protease" evidence="1">
    <location>
        <begin position="132"/>
        <end position="133"/>
    </location>
</feature>
<feature type="site" description="Cleavage; by viral protease" evidence="1">
    <location>
        <begin position="363"/>
        <end position="364"/>
    </location>
</feature>
<feature type="site" description="Cleavage; by viral protease" evidence="1">
    <location>
        <begin position="377"/>
        <end position="378"/>
    </location>
</feature>
<feature type="site" description="Cleavage; by viral protease" evidence="1">
    <location>
        <begin position="434"/>
        <end position="435"/>
    </location>
</feature>
<feature type="site" description="Cleavage; by viral protease" evidence="1">
    <location>
        <begin position="450"/>
        <end position="451"/>
    </location>
</feature>
<feature type="modified residue" description="Phosphoserine; by host MAPK1" evidence="6">
    <location>
        <position position="148"/>
    </location>
</feature>
<feature type="modified residue" description="Asymmetric dimethylarginine; in Nucleocapsid protein p7; by host PRMT6" evidence="1">
    <location>
        <position position="387"/>
    </location>
</feature>
<feature type="modified residue" description="Asymmetric dimethylarginine; in Nucleocapsid protein p7; by host PRMT6" evidence="1">
    <location>
        <position position="409"/>
    </location>
</feature>
<feature type="lipid moiety-binding region" description="N-myristoyl glycine; by host" evidence="1">
    <location>
        <position position="2"/>
    </location>
</feature>
<organismHost>
    <name type="scientific">Homo sapiens</name>
    <name type="common">Human</name>
    <dbReference type="NCBI Taxonomy" id="9606"/>
</organismHost>
<gene>
    <name type="primary">gag</name>
</gene>
<comment type="function">
    <molecule>Gag polyprotein</molecule>
    <text evidence="5">Mediates, with Gag-Pol polyprotein, the essential events in virion assembly, including binding the plasma membrane, making the protein-protein interactions necessary to create spherical particles, recruiting the viral Env proteins, and packaging the genomic RNA via direct interactions with the RNA packaging sequence (Psi).</text>
</comment>
<comment type="function">
    <molecule>Matrix protein p17</molecule>
    <text evidence="1 6">Targets the polyprotein to the plasma membrane via a multipartite membrane-binding signal, that includes its myristoylated N-terminus (By similarity). Matrix protein is part of the pre-integration complex. Implicated in the release from host cell mediated by Vpu. Binds to RNA (By similarity).</text>
</comment>
<comment type="function">
    <molecule>Capsid protein p24</molecule>
    <text evidence="5 6">Forms the conical core that encapsulates the genomic RNA-nucleocapsid complex in the virion. Most core are conical, with only 7% tubular. The core is constituted by capsid protein hexamer subunits. The core is disassembled soon after virion entry (By similarity). The capsid promotes immune invasion by cloaking viral DNA from CGAS detection (By similarity). Host restriction factors such as TRIM5-alpha or TRIMCyp bind retroviral capsids and cause premature capsid disassembly, leading to blocks in reverse transcription. Capsid restriction by TRIM5 is one of the factors which restricts HIV-1 to the human species. Host PIN1 apparently facilitates the virion uncoating (By similarity). On the other hand, interactions with PDZD8 or CYPA stabilize the capsid (By similarity).</text>
</comment>
<comment type="function">
    <molecule>Nucleocapsid protein p7</molecule>
    <text evidence="5">Encapsulates and protects viral dimeric unspliced genomic RNA (gRNA). Binds these RNAs through its zinc fingers. Acts as a nucleic acid chaperone which is involved in rearangement of nucleic acid secondary structure during gRNA retrotranscription. Also facilitates template switch leading to recombination. As part of the polyprotein, participates in gRNA dimerization, packaging, tRNA incorporation and virion assembly.</text>
</comment>
<comment type="function">
    <molecule>p6-gag</molecule>
    <text evidence="6">Plays a role in budding of the assembled particle by interacting with the host class E VPS proteins TSG101 and PDCD6IP/AIP1.</text>
</comment>
<comment type="subunit">
    <molecule>Gag polyprotein</molecule>
    <text evidence="4 5">Homotrimer; further assembles as hexamers of trimers. Oligomerization possibly creates a central hole into which the cytoplasmic tail of the gp41 envelope protein may be inserted. Interacts with host TRIM22; this interaction seems to disrupt proper trafficking of Gag polyprotein and may interfere with budding. Interacts with host PDZD8. When ubiquitinated, interacts (via p6-gag domain) with host PACSIN2; this interaction allows PACSIN2 recruitment to viral assembly sites and its subsequent incorporation into virions. Interacts with MOV10 (By similarity).</text>
</comment>
<comment type="subunit">
    <molecule>Matrix protein p17</molecule>
    <text evidence="5 6">Homotrimer; further assembles as hexamers of trimers. Interacts with gp41 (via C-terminus). Interacts with host CALM1; this interaction induces a conformational change in the Matrix protein, triggering exposure of the myristate group. Interacts with host AP3D1; this interaction allows the polyprotein trafficking to multivesicular bodies during virus assembly. Part of the pre-integration complex (PIC) which is composed of viral genome, matrix protein, Vpr and integrase.</text>
</comment>
<comment type="subunit">
    <molecule>Capsid protein p24</molecule>
    <text evidence="5 6">Homodimer; the homodimer further multimerizes as homohexamers or homopentamers (By similarity). Interacts with host NUP98 (By similarity). Interacts with host PPIA/CYPA; this interaction stabilizes the capsid (By similarity). Interacts with host NUP153 (By similarity). Interacts with host PDZD8; this interaction stabilizes the capsid. Interacts with host TRIM5; this interaction destabilizes the capsid (By similarity). Interacts with host CPSF6 (By similarity). Interacts with host NONO; the interaction is weak (By similarity).</text>
</comment>
<comment type="subunit">
    <molecule>Nucleocapsid protein p7</molecule>
    <text evidence="6">Interacts with host NUP98.</text>
</comment>
<comment type="subunit">
    <molecule>p6-gag</molecule>
    <text evidence="3 6">Interacts with Vpr; this interaction allows Vpr incorporation into the virion. Interacts with host TSG101. p6-gag interacts with host PDCD6IP/AIP1.</text>
</comment>
<comment type="subcellular location">
    <molecule>Gag polyprotein</molecule>
    <subcellularLocation>
        <location evidence="6">Host cell membrane</location>
        <topology evidence="6">Lipid-anchor</topology>
    </subcellularLocation>
    <subcellularLocation>
        <location evidence="6">Host endosome</location>
        <location evidence="6">Host multivesicular body</location>
    </subcellularLocation>
    <text evidence="6">These locations are probably linked to virus assembly sites. The main location is the cell membrane, but under some circumstances, late endosomal compartments can serve as productive sites for virion assembly.</text>
</comment>
<comment type="subcellular location">
    <molecule>Matrix protein p17</molecule>
    <subcellularLocation>
        <location evidence="6">Virion membrane</location>
        <topology evidence="6">Lipid-anchor</topology>
    </subcellularLocation>
    <subcellularLocation>
        <location evidence="1">Host nucleus</location>
    </subcellularLocation>
    <subcellularLocation>
        <location evidence="1">Host cytoplasm</location>
    </subcellularLocation>
</comment>
<comment type="subcellular location">
    <molecule>Capsid protein p24</molecule>
    <subcellularLocation>
        <location evidence="6">Virion</location>
    </subcellularLocation>
</comment>
<comment type="subcellular location">
    <molecule>Nucleocapsid protein p7</molecule>
    <subcellularLocation>
        <location evidence="6">Virion</location>
    </subcellularLocation>
</comment>
<comment type="alternative products">
    <event type="ribosomal frameshifting"/>
    <isoform>
        <id>P05890-1</id>
        <name>Gag polyprotein</name>
        <sequence type="displayed"/>
    </isoform>
    <isoform>
        <id>P05959-1</id>
        <name>Gag-Pol polyprotein</name>
        <sequence type="external"/>
    </isoform>
    <text>Translation results in the formation of the Gag polyprotein most of the time. Ribosomal frameshifting at the gag-pol genes boundary occurs at low frequency and produces the Gag-Pol polyprotein. This strategy of translation probably allows the virus to modulate the quantity of each viral protein. Maintenance of a correct Gag to Gag-Pol ratio is essential for RNA dimerization and viral infectivity.</text>
</comment>
<comment type="domain">
    <text evidence="6">Late-budding domains (L domains) are short sequence motifs essential for viral particle budding. They recruit proteins of the host ESCRT machinery (Endosomal Sorting Complex Required for Transport) or ESCRT-associated proteins. p6-gag contains two L domains: a PTAP/PSAP motif, which interacts with the UEV domain of TSG101 and a LYPX(n)L motif which interacts with PDCD6IP/AIP1.</text>
</comment>
<comment type="PTM">
    <text evidence="6">Gag-Pol polyprotein: Specific enzymatic cleavages by the viral protease yield mature proteins.</text>
</comment>
<comment type="PTM">
    <molecule>Matrix protein p17</molecule>
    <text evidence="5">Tyrosine phosphorylated presumably in the virion by a host kinase. Phosphorylation is apparently not a major regulator of membrane association.</text>
</comment>
<comment type="PTM">
    <text evidence="6">Capsid protein p24 is phosphorylated possibly by host MAPK1; this phosphorylation is necessary for Pin1-mediated virion uncoating.</text>
</comment>
<comment type="PTM">
    <text evidence="2">Nucleocapsid protein p7 is methylated by host PRMT6, impairing its function by reducing RNA annealing and the initiation of reverse transcription.</text>
</comment>
<comment type="miscellaneous">
    <text>HIV-1 lineages are divided in three main groups, M (for Major), O (for Outlier), and N (for New, or Non-M, Non-O). The vast majority of strains found worldwide belong to the group M. Group O seems to be endemic to and largely confined to Cameroon and neighboring countries in West Central Africa, where these viruses represent a small minority of HIV-1 strains. The group N is represented by a limited number of isolates from Cameroonian persons. The group M is further subdivided in 9 clades or subtypes (A to D, F to H, J and K).</text>
</comment>
<comment type="miscellaneous">
    <molecule>Isoform Gag polyprotein</molecule>
    <text>Produced by conventional translation.</text>
</comment>
<comment type="similarity">
    <text evidence="10">Belongs to the primate lentivirus group gag polyprotein family.</text>
</comment>
<dbReference type="EMBL" id="M17451">
    <property type="protein sequence ID" value="AAA45052.1"/>
    <property type="molecule type" value="Genomic_RNA"/>
</dbReference>
<dbReference type="SMR" id="P05890"/>
<dbReference type="PRO" id="PR:P05890"/>
<dbReference type="Proteomes" id="UP000007699">
    <property type="component" value="Segment"/>
</dbReference>
<dbReference type="GO" id="GO:0042025">
    <property type="term" value="C:host cell nucleus"/>
    <property type="evidence" value="ECO:0007669"/>
    <property type="project" value="UniProtKB-SubCell"/>
</dbReference>
<dbReference type="GO" id="GO:0020002">
    <property type="term" value="C:host cell plasma membrane"/>
    <property type="evidence" value="ECO:0007669"/>
    <property type="project" value="UniProtKB-SubCell"/>
</dbReference>
<dbReference type="GO" id="GO:0072494">
    <property type="term" value="C:host multivesicular body"/>
    <property type="evidence" value="ECO:0007669"/>
    <property type="project" value="UniProtKB-SubCell"/>
</dbReference>
<dbReference type="GO" id="GO:0016020">
    <property type="term" value="C:membrane"/>
    <property type="evidence" value="ECO:0007669"/>
    <property type="project" value="UniProtKB-KW"/>
</dbReference>
<dbReference type="GO" id="GO:0019013">
    <property type="term" value="C:viral nucleocapsid"/>
    <property type="evidence" value="ECO:0007669"/>
    <property type="project" value="UniProtKB-KW"/>
</dbReference>
<dbReference type="GO" id="GO:0055036">
    <property type="term" value="C:virion membrane"/>
    <property type="evidence" value="ECO:0007669"/>
    <property type="project" value="UniProtKB-SubCell"/>
</dbReference>
<dbReference type="GO" id="GO:0003723">
    <property type="term" value="F:RNA binding"/>
    <property type="evidence" value="ECO:0007669"/>
    <property type="project" value="UniProtKB-KW"/>
</dbReference>
<dbReference type="GO" id="GO:0005198">
    <property type="term" value="F:structural molecule activity"/>
    <property type="evidence" value="ECO:0007669"/>
    <property type="project" value="InterPro"/>
</dbReference>
<dbReference type="GO" id="GO:0008270">
    <property type="term" value="F:zinc ion binding"/>
    <property type="evidence" value="ECO:0007669"/>
    <property type="project" value="UniProtKB-KW"/>
</dbReference>
<dbReference type="GO" id="GO:0039702">
    <property type="term" value="P:viral budding via host ESCRT complex"/>
    <property type="evidence" value="ECO:0007669"/>
    <property type="project" value="UniProtKB-KW"/>
</dbReference>
<dbReference type="GO" id="GO:0075523">
    <property type="term" value="P:viral translational frameshifting"/>
    <property type="evidence" value="ECO:0007669"/>
    <property type="project" value="UniProtKB-KW"/>
</dbReference>
<dbReference type="FunFam" id="1.10.1200.30:FF:000001">
    <property type="entry name" value="Gag polyprotein"/>
    <property type="match status" value="1"/>
</dbReference>
<dbReference type="FunFam" id="1.10.150.90:FF:000001">
    <property type="entry name" value="Gag polyprotein"/>
    <property type="match status" value="1"/>
</dbReference>
<dbReference type="FunFam" id="1.10.375.10:FF:000001">
    <property type="entry name" value="Gag polyprotein"/>
    <property type="match status" value="1"/>
</dbReference>
<dbReference type="Gene3D" id="1.10.1200.30">
    <property type="match status" value="1"/>
</dbReference>
<dbReference type="Gene3D" id="6.10.250.390">
    <property type="match status" value="1"/>
</dbReference>
<dbReference type="Gene3D" id="1.10.375.10">
    <property type="entry name" value="Human Immunodeficiency Virus Type 1 Capsid Protein"/>
    <property type="match status" value="1"/>
</dbReference>
<dbReference type="Gene3D" id="1.10.150.90">
    <property type="entry name" value="Immunodeficiency lentiviruses, gag gene matrix protein p17"/>
    <property type="match status" value="1"/>
</dbReference>
<dbReference type="Gene3D" id="1.20.5.760">
    <property type="entry name" value="Single helix bin"/>
    <property type="match status" value="1"/>
</dbReference>
<dbReference type="Gene3D" id="4.10.60.10">
    <property type="entry name" value="Zinc finger, CCHC-type"/>
    <property type="match status" value="1"/>
</dbReference>
<dbReference type="InterPro" id="IPR045345">
    <property type="entry name" value="Gag_p24_C"/>
</dbReference>
<dbReference type="InterPro" id="IPR014817">
    <property type="entry name" value="Gag_p6"/>
</dbReference>
<dbReference type="InterPro" id="IPR000071">
    <property type="entry name" value="Lentvrl_matrix_N"/>
</dbReference>
<dbReference type="InterPro" id="IPR012344">
    <property type="entry name" value="Matrix_HIV/RSV_N"/>
</dbReference>
<dbReference type="InterPro" id="IPR050195">
    <property type="entry name" value="Primate_lentivir_Gag_pol-like"/>
</dbReference>
<dbReference type="InterPro" id="IPR008916">
    <property type="entry name" value="Retrov_capsid_C"/>
</dbReference>
<dbReference type="InterPro" id="IPR008919">
    <property type="entry name" value="Retrov_capsid_N"/>
</dbReference>
<dbReference type="InterPro" id="IPR010999">
    <property type="entry name" value="Retrovr_matrix"/>
</dbReference>
<dbReference type="InterPro" id="IPR001878">
    <property type="entry name" value="Znf_CCHC"/>
</dbReference>
<dbReference type="InterPro" id="IPR036875">
    <property type="entry name" value="Znf_CCHC_sf"/>
</dbReference>
<dbReference type="PANTHER" id="PTHR40389">
    <property type="entry name" value="ENDOGENOUS RETROVIRUS GROUP K MEMBER 24 GAG POLYPROTEIN-RELATED"/>
    <property type="match status" value="1"/>
</dbReference>
<dbReference type="PANTHER" id="PTHR40389:SF3">
    <property type="entry name" value="IGE-BINDING PROTEIN"/>
    <property type="match status" value="1"/>
</dbReference>
<dbReference type="Pfam" id="PF00540">
    <property type="entry name" value="Gag_p17"/>
    <property type="match status" value="1"/>
</dbReference>
<dbReference type="Pfam" id="PF00607">
    <property type="entry name" value="Gag_p24"/>
    <property type="match status" value="1"/>
</dbReference>
<dbReference type="Pfam" id="PF19317">
    <property type="entry name" value="Gag_p24_C"/>
    <property type="match status" value="1"/>
</dbReference>
<dbReference type="Pfam" id="PF08705">
    <property type="entry name" value="Gag_p6"/>
    <property type="match status" value="1"/>
</dbReference>
<dbReference type="Pfam" id="PF00098">
    <property type="entry name" value="zf-CCHC"/>
    <property type="match status" value="2"/>
</dbReference>
<dbReference type="PRINTS" id="PR00234">
    <property type="entry name" value="HIV1MATRIX"/>
</dbReference>
<dbReference type="SMART" id="SM00343">
    <property type="entry name" value="ZnF_C2HC"/>
    <property type="match status" value="2"/>
</dbReference>
<dbReference type="SUPFAM" id="SSF47836">
    <property type="entry name" value="Retroviral matrix proteins"/>
    <property type="match status" value="1"/>
</dbReference>
<dbReference type="SUPFAM" id="SSF47353">
    <property type="entry name" value="Retrovirus capsid dimerization domain-like"/>
    <property type="match status" value="1"/>
</dbReference>
<dbReference type="SUPFAM" id="SSF47943">
    <property type="entry name" value="Retrovirus capsid protein, N-terminal core domain"/>
    <property type="match status" value="1"/>
</dbReference>
<dbReference type="SUPFAM" id="SSF57756">
    <property type="entry name" value="Retrovirus zinc finger-like domains"/>
    <property type="match status" value="1"/>
</dbReference>
<dbReference type="PROSITE" id="PS50158">
    <property type="entry name" value="ZF_CCHC"/>
    <property type="match status" value="2"/>
</dbReference>
<accession>P05890</accession>
<keyword id="KW-0014">AIDS</keyword>
<keyword id="KW-0167">Capsid protein</keyword>
<keyword id="KW-1032">Host cell membrane</keyword>
<keyword id="KW-1035">Host cytoplasm</keyword>
<keyword id="KW-1039">Host endosome</keyword>
<keyword id="KW-1043">Host membrane</keyword>
<keyword id="KW-1048">Host nucleus</keyword>
<keyword id="KW-0945">Host-virus interaction</keyword>
<keyword id="KW-0449">Lipoprotein</keyword>
<keyword id="KW-0472">Membrane</keyword>
<keyword id="KW-0479">Metal-binding</keyword>
<keyword id="KW-0488">Methylation</keyword>
<keyword id="KW-0519">Myristate</keyword>
<keyword id="KW-0597">Phosphoprotein</keyword>
<keyword id="KW-1185">Reference proteome</keyword>
<keyword id="KW-0677">Repeat</keyword>
<keyword id="KW-0688">Ribosomal frameshifting</keyword>
<keyword id="KW-0694">RNA-binding</keyword>
<keyword id="KW-1198">Viral budding</keyword>
<keyword id="KW-1187">Viral budding via the host ESCRT complexes</keyword>
<keyword id="KW-0543">Viral nucleoprotein</keyword>
<keyword id="KW-1188">Viral release from host cell</keyword>
<keyword id="KW-0946">Virion</keyword>
<keyword id="KW-0862">Zinc</keyword>
<keyword id="KW-0863">Zinc-finger</keyword>
<name>GAG_HV1RH</name>
<reference key="1">
    <citation type="journal article" date="1986" name="Cell">
        <title>Identification and characterization of conserved and variable regions in the envelope gene of HTLV-III/LAV, the retrovirus of AIDS.</title>
        <authorList>
            <person name="Starcich B.R."/>
            <person name="Hahn B.H."/>
            <person name="Shaw G.M."/>
            <person name="McNeely P.D."/>
            <person name="Modrow S."/>
            <person name="Wolf H."/>
            <person name="Parks E.S."/>
            <person name="Parks W.P."/>
            <person name="Josephs S.F."/>
            <person name="Gallo R.C."/>
            <person name="Wong-Staal F."/>
        </authorList>
    </citation>
    <scope>NUCLEOTIDE SEQUENCE [GENOMIC RNA]</scope>
</reference>
<reference key="2">
    <citation type="journal article" date="2003" name="Biochim. Biophys. Acta">
        <title>Role of HIV-1 Gag domains in viral assembly.</title>
        <authorList>
            <person name="Scarlata S."/>
            <person name="Carter C."/>
        </authorList>
    </citation>
    <scope>REVIEW</scope>
</reference>
<protein>
    <recommendedName>
        <fullName>Gag polyprotein</fullName>
    </recommendedName>
    <alternativeName>
        <fullName>Pr55Gag</fullName>
    </alternativeName>
    <component>
        <recommendedName>
            <fullName>Matrix protein p17</fullName>
            <shortName>MA</shortName>
        </recommendedName>
    </component>
    <component>
        <recommendedName>
            <fullName>Capsid protein p24</fullName>
            <shortName>CA</shortName>
        </recommendedName>
    </component>
    <component>
        <recommendedName>
            <fullName evidence="6">Spacer peptide 1</fullName>
            <shortName>SP1</shortName>
        </recommendedName>
        <alternativeName>
            <fullName>p2</fullName>
        </alternativeName>
    </component>
    <component>
        <recommendedName>
            <fullName>Nucleocapsid protein p7</fullName>
            <shortName>NC</shortName>
        </recommendedName>
    </component>
    <component>
        <recommendedName>
            <fullName evidence="6">Spacer peptide 2</fullName>
            <shortName>SP2</shortName>
        </recommendedName>
        <alternativeName>
            <fullName>p1</fullName>
        </alternativeName>
    </component>
    <component>
        <recommendedName>
            <fullName>p6-gag</fullName>
        </recommendedName>
    </component>
</protein>
<evidence type="ECO:0000250" key="1"/>
<evidence type="ECO:0000250" key="2">
    <source>
        <dbReference type="UniProtKB" id="P03347"/>
    </source>
</evidence>
<evidence type="ECO:0000250" key="3">
    <source>
        <dbReference type="UniProtKB" id="P03348"/>
    </source>
</evidence>
<evidence type="ECO:0000250" key="4">
    <source>
        <dbReference type="UniProtKB" id="P03349"/>
    </source>
</evidence>
<evidence type="ECO:0000250" key="5">
    <source>
        <dbReference type="UniProtKB" id="P04591"/>
    </source>
</evidence>
<evidence type="ECO:0000250" key="6">
    <source>
        <dbReference type="UniProtKB" id="P12493"/>
    </source>
</evidence>
<evidence type="ECO:0000250" key="7">
    <source>
        <dbReference type="UniProtKB" id="P12497"/>
    </source>
</evidence>
<evidence type="ECO:0000255" key="8">
    <source>
        <dbReference type="PROSITE-ProRule" id="PRU00047"/>
    </source>
</evidence>
<evidence type="ECO:0000256" key="9">
    <source>
        <dbReference type="SAM" id="MobiDB-lite"/>
    </source>
</evidence>
<evidence type="ECO:0000305" key="10"/>
<organism>
    <name type="scientific">Human immunodeficiency virus type 1 group M subtype B (isolate RF/HAT3)</name>
    <name type="common">HIV-1</name>
    <dbReference type="NCBI Taxonomy" id="11701"/>
    <lineage>
        <taxon>Viruses</taxon>
        <taxon>Riboviria</taxon>
        <taxon>Pararnavirae</taxon>
        <taxon>Artverviricota</taxon>
        <taxon>Revtraviricetes</taxon>
        <taxon>Ortervirales</taxon>
        <taxon>Retroviridae</taxon>
        <taxon>Orthoretrovirinae</taxon>
        <taxon>Lentivirus</taxon>
        <taxon>Human immunodeficiency virus type 1</taxon>
    </lineage>
</organism>
<proteinExistence type="inferred from homology"/>
<sequence length="501" mass="55956">MGARASVLSGGKLDKWEKIRLRPRGKKRYKLKHIVWASRELERFAVNPSLLETAEGCRQILGQLQPALQTGSEELKSLYNAVATLYCVHQNIEVRDTKEALDKIEEEQNKSKKKAQQAAADTGNGSQVSQNYPIVQNLQGQMVHQAISPRTLNAWVKVVEEKAFSPEVIPMFSALSEGATPQDLNTMLNTVGGHQAAMQMLKETINEEAAEWDRLHPVHAGPIAPGQMREPRGSDIAGTTSTLQEQIGWMTNNPPIPVGEIYKRWIILGLNKIVRMYSPISILDIRQGPKEPFRDYVDRFYKTLRAEQASQDVKNWMTETFLVQNANPDCKTILKALGPAATLEEMMTACQGVGGPSHKARILAEAMSQVTNSATIMLQKGNFRDQRKIVKCFNCGKVGHIAKNCRAPRKKGCWKCGKEGHQMKDCTNEGRQANFLGKIWPSHKGRPGNFLQSRPEPTAPPEESFRFGEETTPSQKQEKIDKELYPLASLKSLFGNDPSSQ</sequence>